<evidence type="ECO:0000255" key="1">
    <source>
        <dbReference type="HAMAP-Rule" id="MF_01020"/>
    </source>
</evidence>
<protein>
    <recommendedName>
        <fullName evidence="1">Phosphoribosyl-ATP pyrophosphatase</fullName>
        <shortName evidence="1">PRA-PH</shortName>
        <ecNumber evidence="1">3.6.1.31</ecNumber>
    </recommendedName>
</protein>
<keyword id="KW-0028">Amino-acid biosynthesis</keyword>
<keyword id="KW-0067">ATP-binding</keyword>
<keyword id="KW-0963">Cytoplasm</keyword>
<keyword id="KW-0368">Histidine biosynthesis</keyword>
<keyword id="KW-0378">Hydrolase</keyword>
<keyword id="KW-0547">Nucleotide-binding</keyword>
<feature type="chain" id="PRO_1000213285" description="Phosphoribosyl-ATP pyrophosphatase">
    <location>
        <begin position="1"/>
        <end position="103"/>
    </location>
</feature>
<comment type="catalytic activity">
    <reaction evidence="1">
        <text>1-(5-phospho-beta-D-ribosyl)-ATP + H2O = 1-(5-phospho-beta-D-ribosyl)-5'-AMP + diphosphate + H(+)</text>
        <dbReference type="Rhea" id="RHEA:22828"/>
        <dbReference type="ChEBI" id="CHEBI:15377"/>
        <dbReference type="ChEBI" id="CHEBI:15378"/>
        <dbReference type="ChEBI" id="CHEBI:33019"/>
        <dbReference type="ChEBI" id="CHEBI:59457"/>
        <dbReference type="ChEBI" id="CHEBI:73183"/>
        <dbReference type="EC" id="3.6.1.31"/>
    </reaction>
</comment>
<comment type="pathway">
    <text evidence="1">Amino-acid biosynthesis; L-histidine biosynthesis; L-histidine from 5-phospho-alpha-D-ribose 1-diphosphate: step 2/9.</text>
</comment>
<comment type="subcellular location">
    <subcellularLocation>
        <location evidence="1">Cytoplasm</location>
    </subcellularLocation>
</comment>
<comment type="similarity">
    <text evidence="1">Belongs to the PRA-PH family.</text>
</comment>
<name>HIS2_LISMC</name>
<proteinExistence type="inferred from homology"/>
<dbReference type="EC" id="3.6.1.31" evidence="1"/>
<dbReference type="EMBL" id="FM242711">
    <property type="protein sequence ID" value="CAS04355.1"/>
    <property type="molecule type" value="Genomic_DNA"/>
</dbReference>
<dbReference type="RefSeq" id="WP_003725463.1">
    <property type="nucleotide sequence ID" value="NC_012488.1"/>
</dbReference>
<dbReference type="SMR" id="C1L0J0"/>
<dbReference type="KEGG" id="lmc:Lm4b_00587"/>
<dbReference type="HOGENOM" id="CLU_123337_0_0_9"/>
<dbReference type="UniPathway" id="UPA00031">
    <property type="reaction ID" value="UER00007"/>
</dbReference>
<dbReference type="GO" id="GO:0005737">
    <property type="term" value="C:cytoplasm"/>
    <property type="evidence" value="ECO:0007669"/>
    <property type="project" value="UniProtKB-SubCell"/>
</dbReference>
<dbReference type="GO" id="GO:0005524">
    <property type="term" value="F:ATP binding"/>
    <property type="evidence" value="ECO:0007669"/>
    <property type="project" value="UniProtKB-KW"/>
</dbReference>
<dbReference type="GO" id="GO:0004636">
    <property type="term" value="F:phosphoribosyl-ATP diphosphatase activity"/>
    <property type="evidence" value="ECO:0007669"/>
    <property type="project" value="UniProtKB-UniRule"/>
</dbReference>
<dbReference type="GO" id="GO:0000105">
    <property type="term" value="P:L-histidine biosynthetic process"/>
    <property type="evidence" value="ECO:0007669"/>
    <property type="project" value="UniProtKB-UniRule"/>
</dbReference>
<dbReference type="CDD" id="cd11534">
    <property type="entry name" value="NTP-PPase_HisIE_like"/>
    <property type="match status" value="1"/>
</dbReference>
<dbReference type="Gene3D" id="1.10.287.1080">
    <property type="entry name" value="MazG-like"/>
    <property type="match status" value="1"/>
</dbReference>
<dbReference type="HAMAP" id="MF_01020">
    <property type="entry name" value="HisE"/>
    <property type="match status" value="1"/>
</dbReference>
<dbReference type="InterPro" id="IPR008179">
    <property type="entry name" value="HisE"/>
</dbReference>
<dbReference type="InterPro" id="IPR021130">
    <property type="entry name" value="PRib-ATP_PPHydrolase-like"/>
</dbReference>
<dbReference type="NCBIfam" id="TIGR03188">
    <property type="entry name" value="histidine_hisI"/>
    <property type="match status" value="1"/>
</dbReference>
<dbReference type="PANTHER" id="PTHR42945">
    <property type="entry name" value="HISTIDINE BIOSYNTHESIS BIFUNCTIONAL PROTEIN"/>
    <property type="match status" value="1"/>
</dbReference>
<dbReference type="PANTHER" id="PTHR42945:SF9">
    <property type="entry name" value="HISTIDINE BIOSYNTHESIS BIFUNCTIONAL PROTEIN HISIE"/>
    <property type="match status" value="1"/>
</dbReference>
<dbReference type="Pfam" id="PF01503">
    <property type="entry name" value="PRA-PH"/>
    <property type="match status" value="1"/>
</dbReference>
<dbReference type="SUPFAM" id="SSF101386">
    <property type="entry name" value="all-alpha NTP pyrophosphatases"/>
    <property type="match status" value="1"/>
</dbReference>
<gene>
    <name evidence="1" type="primary">hisE</name>
    <name type="ordered locus">Lm4b_00587</name>
</gene>
<reference key="1">
    <citation type="journal article" date="2012" name="BMC Genomics">
        <title>Comparative genomics and transcriptomics of lineages I, II, and III strains of Listeria monocytogenes.</title>
        <authorList>
            <person name="Hain T."/>
            <person name="Ghai R."/>
            <person name="Billion A."/>
            <person name="Kuenne C.T."/>
            <person name="Steinweg C."/>
            <person name="Izar B."/>
            <person name="Mohamed W."/>
            <person name="Mraheil M."/>
            <person name="Domann E."/>
            <person name="Schaffrath S."/>
            <person name="Karst U."/>
            <person name="Goesmann A."/>
            <person name="Oehm S."/>
            <person name="Puhler A."/>
            <person name="Merkl R."/>
            <person name="Vorwerk S."/>
            <person name="Glaser P."/>
            <person name="Garrido P."/>
            <person name="Rusniok C."/>
            <person name="Buchrieser C."/>
            <person name="Goebel W."/>
            <person name="Chakraborty T."/>
        </authorList>
    </citation>
    <scope>NUCLEOTIDE SEQUENCE [LARGE SCALE GENOMIC DNA]</scope>
    <source>
        <strain>CLIP80459</strain>
    </source>
</reference>
<organism>
    <name type="scientific">Listeria monocytogenes serotype 4b (strain CLIP80459)</name>
    <dbReference type="NCBI Taxonomy" id="568819"/>
    <lineage>
        <taxon>Bacteria</taxon>
        <taxon>Bacillati</taxon>
        <taxon>Bacillota</taxon>
        <taxon>Bacilli</taxon>
        <taxon>Bacillales</taxon>
        <taxon>Listeriaceae</taxon>
        <taxon>Listeria</taxon>
    </lineage>
</organism>
<sequence length="103" mass="11860">MLNDLYEEIKLRKTQPREGSYTNYLFDKGLDKILKKVGEEATEVVIAAKNNEQELIAEVSDLTYHLLVLLAEQNIPLSKIQAELQNREGKLSTTRDRKEINDL</sequence>
<accession>C1L0J0</accession>